<name>GPMI_ACHLI</name>
<proteinExistence type="inferred from homology"/>
<evidence type="ECO:0000255" key="1">
    <source>
        <dbReference type="HAMAP-Rule" id="MF_01038"/>
    </source>
</evidence>
<accession>A9NF91</accession>
<keyword id="KW-0324">Glycolysis</keyword>
<keyword id="KW-0413">Isomerase</keyword>
<keyword id="KW-0464">Manganese</keyword>
<keyword id="KW-0479">Metal-binding</keyword>
<keyword id="KW-1185">Reference proteome</keyword>
<feature type="chain" id="PRO_1000084295" description="2,3-bisphosphoglycerate-independent phosphoglycerate mutase">
    <location>
        <begin position="1"/>
        <end position="511"/>
    </location>
</feature>
<feature type="active site" description="Phosphoserine intermediate" evidence="1">
    <location>
        <position position="62"/>
    </location>
</feature>
<feature type="binding site" evidence="1">
    <location>
        <position position="12"/>
    </location>
    <ligand>
        <name>Mn(2+)</name>
        <dbReference type="ChEBI" id="CHEBI:29035"/>
        <label>2</label>
    </ligand>
</feature>
<feature type="binding site" evidence="1">
    <location>
        <position position="62"/>
    </location>
    <ligand>
        <name>Mn(2+)</name>
        <dbReference type="ChEBI" id="CHEBI:29035"/>
        <label>2</label>
    </ligand>
</feature>
<feature type="binding site" evidence="1">
    <location>
        <position position="123"/>
    </location>
    <ligand>
        <name>substrate</name>
    </ligand>
</feature>
<feature type="binding site" evidence="1">
    <location>
        <begin position="154"/>
        <end position="155"/>
    </location>
    <ligand>
        <name>substrate</name>
    </ligand>
</feature>
<feature type="binding site" evidence="1">
    <location>
        <position position="181"/>
    </location>
    <ligand>
        <name>substrate</name>
    </ligand>
</feature>
<feature type="binding site" evidence="1">
    <location>
        <position position="187"/>
    </location>
    <ligand>
        <name>substrate</name>
    </ligand>
</feature>
<feature type="binding site" evidence="1">
    <location>
        <begin position="252"/>
        <end position="255"/>
    </location>
    <ligand>
        <name>substrate</name>
    </ligand>
</feature>
<feature type="binding site" evidence="1">
    <location>
        <position position="335"/>
    </location>
    <ligand>
        <name>substrate</name>
    </ligand>
</feature>
<feature type="binding site" evidence="1">
    <location>
        <position position="402"/>
    </location>
    <ligand>
        <name>Mn(2+)</name>
        <dbReference type="ChEBI" id="CHEBI:29035"/>
        <label>1</label>
    </ligand>
</feature>
<feature type="binding site" evidence="1">
    <location>
        <position position="406"/>
    </location>
    <ligand>
        <name>Mn(2+)</name>
        <dbReference type="ChEBI" id="CHEBI:29035"/>
        <label>1</label>
    </ligand>
</feature>
<feature type="binding site" evidence="1">
    <location>
        <position position="444"/>
    </location>
    <ligand>
        <name>Mn(2+)</name>
        <dbReference type="ChEBI" id="CHEBI:29035"/>
        <label>2</label>
    </ligand>
</feature>
<feature type="binding site" evidence="1">
    <location>
        <position position="445"/>
    </location>
    <ligand>
        <name>Mn(2+)</name>
        <dbReference type="ChEBI" id="CHEBI:29035"/>
        <label>2</label>
    </ligand>
</feature>
<feature type="binding site" evidence="1">
    <location>
        <position position="462"/>
    </location>
    <ligand>
        <name>Mn(2+)</name>
        <dbReference type="ChEBI" id="CHEBI:29035"/>
        <label>1</label>
    </ligand>
</feature>
<dbReference type="EC" id="5.4.2.12" evidence="1"/>
<dbReference type="EMBL" id="CP000896">
    <property type="protein sequence ID" value="ABX81021.1"/>
    <property type="molecule type" value="Genomic_DNA"/>
</dbReference>
<dbReference type="RefSeq" id="WP_012242352.1">
    <property type="nucleotide sequence ID" value="NC_010163.1"/>
</dbReference>
<dbReference type="SMR" id="A9NF91"/>
<dbReference type="STRING" id="441768.ACL_0400"/>
<dbReference type="GeneID" id="41338582"/>
<dbReference type="KEGG" id="acl:ACL_0400"/>
<dbReference type="eggNOG" id="COG0696">
    <property type="taxonomic scope" value="Bacteria"/>
</dbReference>
<dbReference type="HOGENOM" id="CLU_026099_2_0_14"/>
<dbReference type="OrthoDB" id="9800863at2"/>
<dbReference type="UniPathway" id="UPA00109">
    <property type="reaction ID" value="UER00186"/>
</dbReference>
<dbReference type="Proteomes" id="UP000008558">
    <property type="component" value="Chromosome"/>
</dbReference>
<dbReference type="GO" id="GO:0005829">
    <property type="term" value="C:cytosol"/>
    <property type="evidence" value="ECO:0007669"/>
    <property type="project" value="TreeGrafter"/>
</dbReference>
<dbReference type="GO" id="GO:0030145">
    <property type="term" value="F:manganese ion binding"/>
    <property type="evidence" value="ECO:0007669"/>
    <property type="project" value="UniProtKB-UniRule"/>
</dbReference>
<dbReference type="GO" id="GO:0004619">
    <property type="term" value="F:phosphoglycerate mutase activity"/>
    <property type="evidence" value="ECO:0007669"/>
    <property type="project" value="UniProtKB-EC"/>
</dbReference>
<dbReference type="GO" id="GO:0006007">
    <property type="term" value="P:glucose catabolic process"/>
    <property type="evidence" value="ECO:0007669"/>
    <property type="project" value="InterPro"/>
</dbReference>
<dbReference type="GO" id="GO:0006096">
    <property type="term" value="P:glycolytic process"/>
    <property type="evidence" value="ECO:0007669"/>
    <property type="project" value="UniProtKB-UniRule"/>
</dbReference>
<dbReference type="CDD" id="cd16010">
    <property type="entry name" value="iPGM"/>
    <property type="match status" value="1"/>
</dbReference>
<dbReference type="FunFam" id="3.40.1450.10:FF:000002">
    <property type="entry name" value="2,3-bisphosphoglycerate-independent phosphoglycerate mutase"/>
    <property type="match status" value="1"/>
</dbReference>
<dbReference type="Gene3D" id="3.40.720.10">
    <property type="entry name" value="Alkaline Phosphatase, subunit A"/>
    <property type="match status" value="1"/>
</dbReference>
<dbReference type="Gene3D" id="3.40.1450.10">
    <property type="entry name" value="BPG-independent phosphoglycerate mutase, domain B"/>
    <property type="match status" value="1"/>
</dbReference>
<dbReference type="HAMAP" id="MF_01038">
    <property type="entry name" value="GpmI"/>
    <property type="match status" value="1"/>
</dbReference>
<dbReference type="InterPro" id="IPR017850">
    <property type="entry name" value="Alkaline_phosphatase_core_sf"/>
</dbReference>
<dbReference type="InterPro" id="IPR011258">
    <property type="entry name" value="BPG-indep_PGM_N"/>
</dbReference>
<dbReference type="InterPro" id="IPR006124">
    <property type="entry name" value="Metalloenzyme"/>
</dbReference>
<dbReference type="InterPro" id="IPR036646">
    <property type="entry name" value="PGAM_B_sf"/>
</dbReference>
<dbReference type="InterPro" id="IPR005995">
    <property type="entry name" value="Pgm_bpd_ind"/>
</dbReference>
<dbReference type="NCBIfam" id="TIGR01307">
    <property type="entry name" value="pgm_bpd_ind"/>
    <property type="match status" value="1"/>
</dbReference>
<dbReference type="PANTHER" id="PTHR31637">
    <property type="entry name" value="2,3-BISPHOSPHOGLYCERATE-INDEPENDENT PHOSPHOGLYCERATE MUTASE"/>
    <property type="match status" value="1"/>
</dbReference>
<dbReference type="PANTHER" id="PTHR31637:SF0">
    <property type="entry name" value="2,3-BISPHOSPHOGLYCERATE-INDEPENDENT PHOSPHOGLYCERATE MUTASE"/>
    <property type="match status" value="1"/>
</dbReference>
<dbReference type="Pfam" id="PF06415">
    <property type="entry name" value="iPGM_N"/>
    <property type="match status" value="1"/>
</dbReference>
<dbReference type="Pfam" id="PF01676">
    <property type="entry name" value="Metalloenzyme"/>
    <property type="match status" value="1"/>
</dbReference>
<dbReference type="PIRSF" id="PIRSF001492">
    <property type="entry name" value="IPGAM"/>
    <property type="match status" value="1"/>
</dbReference>
<dbReference type="SUPFAM" id="SSF64158">
    <property type="entry name" value="2,3-Bisphosphoglycerate-independent phosphoglycerate mutase, substrate-binding domain"/>
    <property type="match status" value="1"/>
</dbReference>
<dbReference type="SUPFAM" id="SSF53649">
    <property type="entry name" value="Alkaline phosphatase-like"/>
    <property type="match status" value="1"/>
</dbReference>
<comment type="function">
    <text evidence="1">Catalyzes the interconversion of 2-phosphoglycerate and 3-phosphoglycerate.</text>
</comment>
<comment type="catalytic activity">
    <reaction evidence="1">
        <text>(2R)-2-phosphoglycerate = (2R)-3-phosphoglycerate</text>
        <dbReference type="Rhea" id="RHEA:15901"/>
        <dbReference type="ChEBI" id="CHEBI:58272"/>
        <dbReference type="ChEBI" id="CHEBI:58289"/>
        <dbReference type="EC" id="5.4.2.12"/>
    </reaction>
</comment>
<comment type="cofactor">
    <cofactor evidence="1">
        <name>Mn(2+)</name>
        <dbReference type="ChEBI" id="CHEBI:29035"/>
    </cofactor>
    <text evidence="1">Binds 2 manganese ions per subunit.</text>
</comment>
<comment type="pathway">
    <text evidence="1">Carbohydrate degradation; glycolysis; pyruvate from D-glyceraldehyde 3-phosphate: step 3/5.</text>
</comment>
<comment type="subunit">
    <text evidence="1">Monomer.</text>
</comment>
<comment type="similarity">
    <text evidence="1">Belongs to the BPG-independent phosphoglycerate mutase family.</text>
</comment>
<sequence>MKEKFAALIIMDGLGIAPASDSNSVTLADTTYLDNLLKEYPNSTLVTSGEAVGLPEGQMGNSEVGHLNLGAGRIVWQSLSRINVAIKDGSFFKNQAFLDAVAHAKKHNSKLHIMGLVSDGGVHAQMGHYLALYDFAKQQNILDRTYLHVFTDGRDTPQESGYGFVKTLVDYGFNVATVSGRFYAMDRDNNWDRVQLAFDAMTLGDGPHFNSALDGIESSYKSGIQDEFIKPFIVNDKGLIENDDAVIFANFRPDRAIRIATALSNPSAAKTIYTEGKPMLNVSKAPKNIFLVSMMHYKETVKGPLAFELQTFDDLYGEVIEKNGFKQIRAAETEKYPHVTFFFDGGKEVPLANSTRILAESPKVPTYDLKPEMSAYELTDKVIAALKTGEYQTMILNFANPDMVGHTGNIEATKKAVEVTVECVGKVTDFIINELGGVAIILADHGNAEQMRDQEGKPHTAHTTNLVPVVVTKKGIKLNSGALCDVAPTLLDLLGIEKPKAMTGTSLIEKI</sequence>
<gene>
    <name evidence="1" type="primary">gpmI</name>
    <name type="ordered locus">ACL_0400</name>
</gene>
<organism>
    <name type="scientific">Acholeplasma laidlawii (strain PG-8A)</name>
    <dbReference type="NCBI Taxonomy" id="441768"/>
    <lineage>
        <taxon>Bacteria</taxon>
        <taxon>Bacillati</taxon>
        <taxon>Mycoplasmatota</taxon>
        <taxon>Mollicutes</taxon>
        <taxon>Acholeplasmatales</taxon>
        <taxon>Acholeplasmataceae</taxon>
        <taxon>Acholeplasma</taxon>
    </lineage>
</organism>
<protein>
    <recommendedName>
        <fullName evidence="1">2,3-bisphosphoglycerate-independent phosphoglycerate mutase</fullName>
        <shortName evidence="1">BPG-independent PGAM</shortName>
        <shortName evidence="1">Phosphoglyceromutase</shortName>
        <shortName evidence="1">iPGM</shortName>
        <ecNumber evidence="1">5.4.2.12</ecNumber>
    </recommendedName>
</protein>
<reference key="1">
    <citation type="journal article" date="2011" name="J. Bacteriol.">
        <title>Complete genome and proteome of Acholeplasma laidlawii.</title>
        <authorList>
            <person name="Lazarev V.N."/>
            <person name="Levitskii S.A."/>
            <person name="Basovskii Y.I."/>
            <person name="Chukin M.M."/>
            <person name="Akopian T.A."/>
            <person name="Vereshchagin V.V."/>
            <person name="Kostrjukova E.S."/>
            <person name="Kovaleva G.Y."/>
            <person name="Kazanov M.D."/>
            <person name="Malko D.B."/>
            <person name="Vitreschak A.G."/>
            <person name="Sernova N.V."/>
            <person name="Gelfand M.S."/>
            <person name="Demina I.A."/>
            <person name="Serebryakova M.V."/>
            <person name="Galyamina M.A."/>
            <person name="Vtyurin N.N."/>
            <person name="Rogov S.I."/>
            <person name="Alexeev D.G."/>
            <person name="Ladygina V.G."/>
            <person name="Govorun V.M."/>
        </authorList>
    </citation>
    <scope>NUCLEOTIDE SEQUENCE [LARGE SCALE GENOMIC DNA]</scope>
    <source>
        <strain>PG-8A</strain>
    </source>
</reference>